<proteinExistence type="evidence at transcript level"/>
<sequence>MVRYRMRSPSEGPHQGPGQDHEREEQGQGQELSPERVEDYGRTHRGHHRHRRCSRKRLHRIHKRRRSCRRRRRHSCCHRRRHRRGCRRSRRRRRCKCRKCRRHCH</sequence>
<organism>
    <name type="scientific">Rattus fuscipes</name>
    <name type="common">Bush rat</name>
    <dbReference type="NCBI Taxonomy" id="10119"/>
    <lineage>
        <taxon>Eukaryota</taxon>
        <taxon>Metazoa</taxon>
        <taxon>Chordata</taxon>
        <taxon>Craniata</taxon>
        <taxon>Vertebrata</taxon>
        <taxon>Euteleostomi</taxon>
        <taxon>Mammalia</taxon>
        <taxon>Eutheria</taxon>
        <taxon>Euarchontoglires</taxon>
        <taxon>Glires</taxon>
        <taxon>Rodentia</taxon>
        <taxon>Myomorpha</taxon>
        <taxon>Muroidea</taxon>
        <taxon>Muridae</taxon>
        <taxon>Murinae</taxon>
        <taxon>Rattus</taxon>
    </lineage>
</organism>
<evidence type="ECO:0000250" key="1">
    <source>
        <dbReference type="UniProtKB" id="P07978"/>
    </source>
</evidence>
<evidence type="ECO:0000250" key="2">
    <source>
        <dbReference type="UniProtKB" id="P11248"/>
    </source>
</evidence>
<evidence type="ECO:0000256" key="3">
    <source>
        <dbReference type="SAM" id="MobiDB-lite"/>
    </source>
</evidence>
<evidence type="ECO:0000305" key="4"/>
<comment type="function">
    <text evidence="1">Protamines substitute for histones in the chromatin of sperm during the haploid phase of spermatogenesis. They compact sperm DNA into a highly condensed, stable and inactive complex.</text>
</comment>
<comment type="subunit">
    <text evidence="1">Interacts with TDRP.</text>
</comment>
<comment type="subcellular location">
    <subcellularLocation>
        <location evidence="1">Nucleus</location>
    </subcellularLocation>
    <subcellularLocation>
        <location evidence="1">Chromosome</location>
    </subcellularLocation>
</comment>
<comment type="tissue specificity">
    <text>Testis.</text>
</comment>
<comment type="PTM">
    <text evidence="1">Proteolytic processing into mature chains is required for histone eviction during spermatogenesis. Transition proteins (TNP1 and TNP2) are required for processing.</text>
</comment>
<comment type="similarity">
    <text evidence="4">Belongs to the protamine P2 family.</text>
</comment>
<dbReference type="EMBL" id="AF268201">
    <property type="protein sequence ID" value="AAK98520.1"/>
    <property type="molecule type" value="Genomic_DNA"/>
</dbReference>
<dbReference type="EMBL" id="AF268202">
    <property type="protein sequence ID" value="AAK98521.1"/>
    <property type="molecule type" value="mRNA"/>
</dbReference>
<dbReference type="GO" id="GO:0000786">
    <property type="term" value="C:nucleosome"/>
    <property type="evidence" value="ECO:0007669"/>
    <property type="project" value="UniProtKB-KW"/>
</dbReference>
<dbReference type="GO" id="GO:0005634">
    <property type="term" value="C:nucleus"/>
    <property type="evidence" value="ECO:0007669"/>
    <property type="project" value="UniProtKB-SubCell"/>
</dbReference>
<dbReference type="GO" id="GO:0003677">
    <property type="term" value="F:DNA binding"/>
    <property type="evidence" value="ECO:0007669"/>
    <property type="project" value="UniProtKB-KW"/>
</dbReference>
<dbReference type="GO" id="GO:0030261">
    <property type="term" value="P:chromosome condensation"/>
    <property type="evidence" value="ECO:0007669"/>
    <property type="project" value="UniProtKB-KW"/>
</dbReference>
<dbReference type="GO" id="GO:0006997">
    <property type="term" value="P:nucleus organization"/>
    <property type="evidence" value="ECO:0007669"/>
    <property type="project" value="TreeGrafter"/>
</dbReference>
<dbReference type="GO" id="GO:0007286">
    <property type="term" value="P:spermatid development"/>
    <property type="evidence" value="ECO:0007669"/>
    <property type="project" value="InterPro"/>
</dbReference>
<dbReference type="GO" id="GO:0007283">
    <property type="term" value="P:spermatogenesis"/>
    <property type="evidence" value="ECO:0000250"/>
    <property type="project" value="UniProtKB"/>
</dbReference>
<dbReference type="InterPro" id="IPR000492">
    <property type="entry name" value="PRM2"/>
</dbReference>
<dbReference type="PANTHER" id="PTHR21341">
    <property type="entry name" value="PROTAMINE-2"/>
    <property type="match status" value="1"/>
</dbReference>
<dbReference type="PANTHER" id="PTHR21341:SF2">
    <property type="entry name" value="PROTAMINE-2"/>
    <property type="match status" value="1"/>
</dbReference>
<dbReference type="Pfam" id="PF00841">
    <property type="entry name" value="Protamine_P2"/>
    <property type="match status" value="1"/>
</dbReference>
<accession>Q91VE1</accession>
<keyword id="KW-0158">Chromosome</keyword>
<keyword id="KW-0217">Developmental protein</keyword>
<keyword id="KW-0221">Differentiation</keyword>
<keyword id="KW-0226">DNA condensation</keyword>
<keyword id="KW-0238">DNA-binding</keyword>
<keyword id="KW-0544">Nucleosome core</keyword>
<keyword id="KW-0539">Nucleus</keyword>
<keyword id="KW-0597">Phosphoprotein</keyword>
<keyword id="KW-0744">Spermatogenesis</keyword>
<protein>
    <recommendedName>
        <fullName>Protamine-2</fullName>
    </recommendedName>
    <alternativeName>
        <fullName>Sperm histone P2</fullName>
    </alternativeName>
    <alternativeName>
        <fullName>Sperm protamine P2</fullName>
    </alternativeName>
</protein>
<reference key="1">
    <citation type="submission" date="2000-05" db="EMBL/GenBank/DDBJ databases">
        <title>Variable regulation of protamine 2 gene expression in muroid rodents.</title>
        <authorList>
            <person name="Dolan C.E."/>
            <person name="Fabes S.E."/>
            <person name="Mazrimas J.A."/>
            <person name="Corzett M.H."/>
            <person name="Breed W.G."/>
            <person name="Balhorn R."/>
        </authorList>
    </citation>
    <scope>NUCLEOTIDE SEQUENCE [GENOMIC DNA / MRNA]</scope>
</reference>
<name>PRM2_RATFU</name>
<feature type="chain" id="PRO_0000191607" description="Protamine-2">
    <location>
        <begin position="1"/>
        <end position="105"/>
    </location>
</feature>
<feature type="region of interest" description="Disordered" evidence="3">
    <location>
        <begin position="1"/>
        <end position="74"/>
    </location>
</feature>
<feature type="compositionally biased region" description="Basic and acidic residues" evidence="3">
    <location>
        <begin position="33"/>
        <end position="42"/>
    </location>
</feature>
<feature type="compositionally biased region" description="Basic residues" evidence="3">
    <location>
        <begin position="43"/>
        <end position="74"/>
    </location>
</feature>
<feature type="modified residue" description="Phosphoserine" evidence="2">
    <location>
        <position position="8"/>
    </location>
</feature>
<feature type="modified residue" description="Phosphoserine" evidence="2">
    <location>
        <position position="10"/>
    </location>
</feature>
<feature type="modified residue" description="Phosphoserine" evidence="2">
    <location>
        <position position="33"/>
    </location>
</feature>
<gene>
    <name type="primary">Prm2</name>
</gene>